<protein>
    <recommendedName>
        <fullName evidence="2">Protein YodE</fullName>
    </recommendedName>
</protein>
<name>YODE_ECOLI</name>
<dbReference type="EMBL" id="U00096">
    <property type="protein sequence ID" value="QNV50533.1"/>
    <property type="molecule type" value="Genomic_DNA"/>
</dbReference>
<dbReference type="InParanoid" id="P0DSF8"/>
<dbReference type="BioCyc" id="EcoCyc:MONOMER0-4492"/>
<dbReference type="Proteomes" id="UP000000625">
    <property type="component" value="Chromosome"/>
</dbReference>
<dbReference type="GO" id="GO:0030308">
    <property type="term" value="P:negative regulation of cell growth"/>
    <property type="evidence" value="ECO:0000315"/>
    <property type="project" value="EcoCyc"/>
</dbReference>
<dbReference type="Pfam" id="PF23504">
    <property type="entry name" value="YodE"/>
    <property type="match status" value="1"/>
</dbReference>
<gene>
    <name evidence="2" type="primary">yodE</name>
    <name evidence="4" type="ordered locus">b4780</name>
</gene>
<reference key="1">
    <citation type="journal article" date="1997" name="Science">
        <title>The complete genome sequence of Escherichia coli K-12.</title>
        <authorList>
            <person name="Blattner F.R."/>
            <person name="Plunkett G. III"/>
            <person name="Bloch C.A."/>
            <person name="Perna N.T."/>
            <person name="Burland V."/>
            <person name="Riley M."/>
            <person name="Collado-Vides J."/>
            <person name="Glasner J.D."/>
            <person name="Rode C.K."/>
            <person name="Mayhew G.F."/>
            <person name="Gregor J."/>
            <person name="Davis N.W."/>
            <person name="Kirkpatrick H.A."/>
            <person name="Goeden M.A."/>
            <person name="Rose D.J."/>
            <person name="Mau B."/>
            <person name="Shao Y."/>
        </authorList>
    </citation>
    <scope>NUCLEOTIDE SEQUENCE [LARGE SCALE GENOMIC DNA]</scope>
    <source>
        <strain>K12 / MG1655 / ATCC 47076</strain>
    </source>
</reference>
<reference key="2">
    <citation type="journal article" date="2019" name="MBio">
        <title>Identifying small proteins by ribosome profiling with stalled initiation complexes.</title>
        <authorList>
            <person name="Weaver J."/>
            <person name="Mohammad F."/>
            <person name="Buskirk A.R."/>
            <person name="Storz G."/>
        </authorList>
    </citation>
    <scope>IDENTIFICATION</scope>
    <scope>INDUCTION</scope>
    <source>
        <strain>K12 / MG1655 / ATCC 47076</strain>
    </source>
</reference>
<comment type="induction">
    <text evidence="1">Expressed at high levels equally in exponential and stationary phase in rich medium (at protein level).</text>
</comment>
<comment type="miscellaneous">
    <text evidence="3">Overlaps on the same strand with small regulatory RNA RyeG.</text>
</comment>
<accession>P0DSF8</accession>
<accession>A0A7H2C786</accession>
<sequence>MGNDAFKLSSADRGDITINNESGHLIVNTAILSGDIVTLRGGEIRLVL</sequence>
<proteinExistence type="evidence at protein level"/>
<feature type="chain" id="PRO_0000447161" description="Protein YodE">
    <location>
        <begin position="1"/>
        <end position="48"/>
    </location>
</feature>
<organism>
    <name type="scientific">Escherichia coli (strain K12)</name>
    <dbReference type="NCBI Taxonomy" id="83333"/>
    <lineage>
        <taxon>Bacteria</taxon>
        <taxon>Pseudomonadati</taxon>
        <taxon>Pseudomonadota</taxon>
        <taxon>Gammaproteobacteria</taxon>
        <taxon>Enterobacterales</taxon>
        <taxon>Enterobacteriaceae</taxon>
        <taxon>Escherichia</taxon>
    </lineage>
</organism>
<keyword id="KW-1185">Reference proteome</keyword>
<evidence type="ECO:0000269" key="1">
    <source>
    </source>
</evidence>
<evidence type="ECO:0000303" key="2">
    <source>
    </source>
</evidence>
<evidence type="ECO:0000305" key="3"/>
<evidence type="ECO:0000312" key="4">
    <source>
        <dbReference type="EMBL" id="QNV50533.1"/>
    </source>
</evidence>